<keyword id="KW-0030">Aminoacyl-tRNA synthetase</keyword>
<keyword id="KW-0067">ATP-binding</keyword>
<keyword id="KW-0963">Cytoplasm</keyword>
<keyword id="KW-0436">Ligase</keyword>
<keyword id="KW-0547">Nucleotide-binding</keyword>
<keyword id="KW-0648">Protein biosynthesis</keyword>
<keyword id="KW-1185">Reference proteome</keyword>
<reference key="1">
    <citation type="journal article" date="2005" name="Genome Res.">
        <title>Coping with cold: the genome of the versatile marine Antarctica bacterium Pseudoalteromonas haloplanktis TAC125.</title>
        <authorList>
            <person name="Medigue C."/>
            <person name="Krin E."/>
            <person name="Pascal G."/>
            <person name="Barbe V."/>
            <person name="Bernsel A."/>
            <person name="Bertin P.N."/>
            <person name="Cheung F."/>
            <person name="Cruveiller S."/>
            <person name="D'Amico S."/>
            <person name="Duilio A."/>
            <person name="Fang G."/>
            <person name="Feller G."/>
            <person name="Ho C."/>
            <person name="Mangenot S."/>
            <person name="Marino G."/>
            <person name="Nilsson J."/>
            <person name="Parrilli E."/>
            <person name="Rocha E.P.C."/>
            <person name="Rouy Z."/>
            <person name="Sekowska A."/>
            <person name="Tutino M.L."/>
            <person name="Vallenet D."/>
            <person name="von Heijne G."/>
            <person name="Danchin A."/>
        </authorList>
    </citation>
    <scope>NUCLEOTIDE SEQUENCE [LARGE SCALE GENOMIC DNA]</scope>
    <source>
        <strain>TAC 125</strain>
    </source>
</reference>
<comment type="function">
    <text evidence="1">Catalyzes the attachment of glutamate to tRNA(Glu) in a two-step reaction: glutamate is first activated by ATP to form Glu-AMP and then transferred to the acceptor end of tRNA(Glu).</text>
</comment>
<comment type="catalytic activity">
    <reaction evidence="1">
        <text>tRNA(Glu) + L-glutamate + ATP = L-glutamyl-tRNA(Glu) + AMP + diphosphate</text>
        <dbReference type="Rhea" id="RHEA:23540"/>
        <dbReference type="Rhea" id="RHEA-COMP:9663"/>
        <dbReference type="Rhea" id="RHEA-COMP:9680"/>
        <dbReference type="ChEBI" id="CHEBI:29985"/>
        <dbReference type="ChEBI" id="CHEBI:30616"/>
        <dbReference type="ChEBI" id="CHEBI:33019"/>
        <dbReference type="ChEBI" id="CHEBI:78442"/>
        <dbReference type="ChEBI" id="CHEBI:78520"/>
        <dbReference type="ChEBI" id="CHEBI:456215"/>
        <dbReference type="EC" id="6.1.1.17"/>
    </reaction>
</comment>
<comment type="subunit">
    <text evidence="1">Monomer.</text>
</comment>
<comment type="subcellular location">
    <subcellularLocation>
        <location evidence="1">Cytoplasm</location>
    </subcellularLocation>
</comment>
<comment type="similarity">
    <text evidence="1">Belongs to the class-I aminoacyl-tRNA synthetase family. Glutamate--tRNA ligase type 1 subfamily.</text>
</comment>
<evidence type="ECO:0000255" key="1">
    <source>
        <dbReference type="HAMAP-Rule" id="MF_00022"/>
    </source>
</evidence>
<name>SYE_PSET1</name>
<sequence>MTIRTRVAPSPTGDPHLGTAYIALFNYCFAKQQGGEFVLRIEDTDQVRSTAESEQAIMDSLRWLGLEWDHGPDVGGEFGPYRQSERSDLYKKYAHQLVDDGKAFYCFATSEELDKMREEQMAEGLRPKYDGRGLNHTDDEIKANLAAGKPYVIRMKIPSEGTFKFNDYLRDEIEIPWENVDMQVLLKADGFPTYFLANVVDDHHMQISHIFRGEEWINSAPKLLKLYEDFGWEAPVLGHLPLLRNPDKSKLSKRKNPTSINYYKEMGYLPEAVLNYLGRMGWSMPDEREKFTLNEMIENFDMKRVSLGGPVFDVDKLSWLNGMWIRENLTDEQLIQRFVDWKFNGEMLAKVLPEAKARINTLSDLVDLAGHFVGGIPTYDPALLTAGKADEDVIRQALQFFVWQLEGLRSFDKPAIFAIAKEVATFHELKIKDFLEPIFVAITGKTSSTSVLDAMEILGSDLSRARLRVALAHLGISKKQAKNIERAYREYPSA</sequence>
<proteinExistence type="inferred from homology"/>
<dbReference type="EC" id="6.1.1.17" evidence="1"/>
<dbReference type="EMBL" id="CR954246">
    <property type="protein sequence ID" value="CAI85720.1"/>
    <property type="molecule type" value="Genomic_DNA"/>
</dbReference>
<dbReference type="SMR" id="Q3IHK6"/>
<dbReference type="STRING" id="326442.PSHAa0635"/>
<dbReference type="KEGG" id="pha:PSHAa0635"/>
<dbReference type="PATRIC" id="fig|326442.8.peg.598"/>
<dbReference type="eggNOG" id="COG0008">
    <property type="taxonomic scope" value="Bacteria"/>
</dbReference>
<dbReference type="HOGENOM" id="CLU_015768_6_3_6"/>
<dbReference type="BioCyc" id="PHAL326442:PSHA_RS03100-MONOMER"/>
<dbReference type="Proteomes" id="UP000006843">
    <property type="component" value="Chromosome I"/>
</dbReference>
<dbReference type="GO" id="GO:0005829">
    <property type="term" value="C:cytosol"/>
    <property type="evidence" value="ECO:0007669"/>
    <property type="project" value="TreeGrafter"/>
</dbReference>
<dbReference type="GO" id="GO:0005524">
    <property type="term" value="F:ATP binding"/>
    <property type="evidence" value="ECO:0007669"/>
    <property type="project" value="UniProtKB-UniRule"/>
</dbReference>
<dbReference type="GO" id="GO:0004818">
    <property type="term" value="F:glutamate-tRNA ligase activity"/>
    <property type="evidence" value="ECO:0007669"/>
    <property type="project" value="UniProtKB-UniRule"/>
</dbReference>
<dbReference type="GO" id="GO:0000049">
    <property type="term" value="F:tRNA binding"/>
    <property type="evidence" value="ECO:0007669"/>
    <property type="project" value="InterPro"/>
</dbReference>
<dbReference type="GO" id="GO:0008270">
    <property type="term" value="F:zinc ion binding"/>
    <property type="evidence" value="ECO:0007669"/>
    <property type="project" value="InterPro"/>
</dbReference>
<dbReference type="GO" id="GO:0006424">
    <property type="term" value="P:glutamyl-tRNA aminoacylation"/>
    <property type="evidence" value="ECO:0007669"/>
    <property type="project" value="UniProtKB-UniRule"/>
</dbReference>
<dbReference type="CDD" id="cd00808">
    <property type="entry name" value="GluRS_core"/>
    <property type="match status" value="1"/>
</dbReference>
<dbReference type="FunFam" id="3.40.50.620:FF:000045">
    <property type="entry name" value="Glutamate--tRNA ligase, mitochondrial"/>
    <property type="match status" value="1"/>
</dbReference>
<dbReference type="Gene3D" id="1.10.10.350">
    <property type="match status" value="1"/>
</dbReference>
<dbReference type="Gene3D" id="3.40.50.620">
    <property type="entry name" value="HUPs"/>
    <property type="match status" value="1"/>
</dbReference>
<dbReference type="HAMAP" id="MF_00022">
    <property type="entry name" value="Glu_tRNA_synth_type1"/>
    <property type="match status" value="1"/>
</dbReference>
<dbReference type="InterPro" id="IPR045462">
    <property type="entry name" value="aa-tRNA-synth_I_cd-bd"/>
</dbReference>
<dbReference type="InterPro" id="IPR020751">
    <property type="entry name" value="aa-tRNA-synth_I_codon-bd_sub2"/>
</dbReference>
<dbReference type="InterPro" id="IPR001412">
    <property type="entry name" value="aa-tRNA-synth_I_CS"/>
</dbReference>
<dbReference type="InterPro" id="IPR008925">
    <property type="entry name" value="aa_tRNA-synth_I_cd-bd_sf"/>
</dbReference>
<dbReference type="InterPro" id="IPR004527">
    <property type="entry name" value="Glu-tRNA-ligase_bac/mito"/>
</dbReference>
<dbReference type="InterPro" id="IPR000924">
    <property type="entry name" value="Glu/Gln-tRNA-synth"/>
</dbReference>
<dbReference type="InterPro" id="IPR020058">
    <property type="entry name" value="Glu/Gln-tRNA-synth_Ib_cat-dom"/>
</dbReference>
<dbReference type="InterPro" id="IPR049940">
    <property type="entry name" value="GluQ/Sye"/>
</dbReference>
<dbReference type="InterPro" id="IPR033910">
    <property type="entry name" value="GluRS_core"/>
</dbReference>
<dbReference type="InterPro" id="IPR014729">
    <property type="entry name" value="Rossmann-like_a/b/a_fold"/>
</dbReference>
<dbReference type="NCBIfam" id="TIGR00464">
    <property type="entry name" value="gltX_bact"/>
    <property type="match status" value="1"/>
</dbReference>
<dbReference type="PANTHER" id="PTHR43311">
    <property type="entry name" value="GLUTAMATE--TRNA LIGASE"/>
    <property type="match status" value="1"/>
</dbReference>
<dbReference type="PANTHER" id="PTHR43311:SF2">
    <property type="entry name" value="GLUTAMATE--TRNA LIGASE, MITOCHONDRIAL-RELATED"/>
    <property type="match status" value="1"/>
</dbReference>
<dbReference type="Pfam" id="PF19269">
    <property type="entry name" value="Anticodon_2"/>
    <property type="match status" value="1"/>
</dbReference>
<dbReference type="Pfam" id="PF00749">
    <property type="entry name" value="tRNA-synt_1c"/>
    <property type="match status" value="1"/>
</dbReference>
<dbReference type="PRINTS" id="PR00987">
    <property type="entry name" value="TRNASYNTHGLU"/>
</dbReference>
<dbReference type="SUPFAM" id="SSF48163">
    <property type="entry name" value="An anticodon-binding domain of class I aminoacyl-tRNA synthetases"/>
    <property type="match status" value="1"/>
</dbReference>
<dbReference type="SUPFAM" id="SSF52374">
    <property type="entry name" value="Nucleotidylyl transferase"/>
    <property type="match status" value="1"/>
</dbReference>
<dbReference type="PROSITE" id="PS00178">
    <property type="entry name" value="AA_TRNA_LIGASE_I"/>
    <property type="match status" value="1"/>
</dbReference>
<organism>
    <name type="scientific">Pseudoalteromonas translucida (strain TAC 125)</name>
    <dbReference type="NCBI Taxonomy" id="326442"/>
    <lineage>
        <taxon>Bacteria</taxon>
        <taxon>Pseudomonadati</taxon>
        <taxon>Pseudomonadota</taxon>
        <taxon>Gammaproteobacteria</taxon>
        <taxon>Alteromonadales</taxon>
        <taxon>Pseudoalteromonadaceae</taxon>
        <taxon>Pseudoalteromonas</taxon>
    </lineage>
</organism>
<accession>Q3IHK6</accession>
<gene>
    <name evidence="1" type="primary">gltX</name>
    <name type="ordered locus">PSHAa0635</name>
</gene>
<feature type="chain" id="PRO_0000237387" description="Glutamate--tRNA ligase">
    <location>
        <begin position="1"/>
        <end position="494"/>
    </location>
</feature>
<feature type="short sequence motif" description="'HIGH' region" evidence="1">
    <location>
        <begin position="9"/>
        <end position="19"/>
    </location>
</feature>
<feature type="short sequence motif" description="'KMSKS' region" evidence="1">
    <location>
        <begin position="250"/>
        <end position="254"/>
    </location>
</feature>
<feature type="binding site" evidence="1">
    <location>
        <position position="253"/>
    </location>
    <ligand>
        <name>ATP</name>
        <dbReference type="ChEBI" id="CHEBI:30616"/>
    </ligand>
</feature>
<protein>
    <recommendedName>
        <fullName evidence="1">Glutamate--tRNA ligase</fullName>
        <ecNumber evidence="1">6.1.1.17</ecNumber>
    </recommendedName>
    <alternativeName>
        <fullName evidence="1">Glutamyl-tRNA synthetase</fullName>
        <shortName evidence="1">GluRS</shortName>
    </alternativeName>
</protein>